<dbReference type="EMBL" id="AY194290">
    <property type="protein sequence ID" value="AAP35046.1"/>
    <property type="molecule type" value="mRNA"/>
</dbReference>
<dbReference type="RefSeq" id="NP_001075358.1">
    <property type="nucleotide sequence ID" value="NM_001081889.1"/>
</dbReference>
<dbReference type="RefSeq" id="XP_070120244.1">
    <property type="nucleotide sequence ID" value="XM_070264143.1"/>
</dbReference>
<dbReference type="SMR" id="Q7YS54"/>
<dbReference type="FunCoup" id="Q7YS54">
    <property type="interactions" value="225"/>
</dbReference>
<dbReference type="STRING" id="9796.ENSECAP00000018779"/>
<dbReference type="PaxDb" id="9796-ENSECAP00000018779"/>
<dbReference type="GeneID" id="100033992"/>
<dbReference type="KEGG" id="ecb:100033992"/>
<dbReference type="CTD" id="1687"/>
<dbReference type="InParanoid" id="Q7YS54"/>
<dbReference type="OrthoDB" id="8815334at2759"/>
<dbReference type="Proteomes" id="UP000002281">
    <property type="component" value="Unplaced"/>
</dbReference>
<dbReference type="GO" id="GO:0005737">
    <property type="term" value="C:cytoplasm"/>
    <property type="evidence" value="ECO:0000318"/>
    <property type="project" value="GO_Central"/>
</dbReference>
<dbReference type="GO" id="GO:0005829">
    <property type="term" value="C:cytosol"/>
    <property type="evidence" value="ECO:0007669"/>
    <property type="project" value="UniProtKB-SubCell"/>
</dbReference>
<dbReference type="GO" id="GO:0016020">
    <property type="term" value="C:membrane"/>
    <property type="evidence" value="ECO:0000250"/>
    <property type="project" value="UniProtKB"/>
</dbReference>
<dbReference type="GO" id="GO:0005886">
    <property type="term" value="C:plasma membrane"/>
    <property type="evidence" value="ECO:0000250"/>
    <property type="project" value="UniProtKB"/>
</dbReference>
<dbReference type="GO" id="GO:1901612">
    <property type="term" value="F:cardiolipin binding"/>
    <property type="evidence" value="ECO:0000250"/>
    <property type="project" value="UniProtKB"/>
</dbReference>
<dbReference type="GO" id="GO:0005546">
    <property type="term" value="F:phosphatidylinositol-4,5-bisphosphate binding"/>
    <property type="evidence" value="ECO:0000250"/>
    <property type="project" value="UniProtKB"/>
</dbReference>
<dbReference type="GO" id="GO:0071356">
    <property type="term" value="P:cellular response to tumor necrosis factor"/>
    <property type="evidence" value="ECO:0000250"/>
    <property type="project" value="UniProtKB"/>
</dbReference>
<dbReference type="GO" id="GO:0098586">
    <property type="term" value="P:cellular response to virus"/>
    <property type="evidence" value="ECO:0000250"/>
    <property type="project" value="UniProtKB"/>
</dbReference>
<dbReference type="GO" id="GO:2001244">
    <property type="term" value="P:positive regulation of intrinsic apoptotic signaling pathway"/>
    <property type="evidence" value="ECO:0000250"/>
    <property type="project" value="UniProtKB"/>
</dbReference>
<dbReference type="GO" id="GO:0043410">
    <property type="term" value="P:positive regulation of MAPK cascade"/>
    <property type="evidence" value="ECO:0000250"/>
    <property type="project" value="UniProtKB"/>
</dbReference>
<dbReference type="GO" id="GO:0012501">
    <property type="term" value="P:programmed cell death"/>
    <property type="evidence" value="ECO:0000250"/>
    <property type="project" value="UniProtKB"/>
</dbReference>
<dbReference type="GO" id="GO:0070269">
    <property type="term" value="P:pyroptotic inflammatory response"/>
    <property type="evidence" value="ECO:0000250"/>
    <property type="project" value="UniProtKB"/>
</dbReference>
<dbReference type="InterPro" id="IPR040460">
    <property type="entry name" value="Gasdermin_pore"/>
</dbReference>
<dbReference type="InterPro" id="IPR041263">
    <property type="entry name" value="Gasdermin_PUB"/>
</dbReference>
<dbReference type="InterPro" id="IPR042377">
    <property type="entry name" value="GSDME"/>
</dbReference>
<dbReference type="PANTHER" id="PTHR15207:SF1">
    <property type="entry name" value="GASDERMIN-E"/>
    <property type="match status" value="1"/>
</dbReference>
<dbReference type="PANTHER" id="PTHR15207">
    <property type="entry name" value="NONSYNDROMIC HEARING IMPAIRMENT PROTEIN"/>
    <property type="match status" value="1"/>
</dbReference>
<dbReference type="Pfam" id="PF04598">
    <property type="entry name" value="Gasdermin"/>
    <property type="match status" value="1"/>
</dbReference>
<dbReference type="Pfam" id="PF17708">
    <property type="entry name" value="Gasdermin_C"/>
    <property type="match status" value="1"/>
</dbReference>
<gene>
    <name evidence="1" type="primary">GSDME</name>
    <name evidence="1" type="synonym">DFNA5</name>
</gene>
<proteinExistence type="evidence at transcript level"/>
<organism>
    <name type="scientific">Equus caballus</name>
    <name type="common">Horse</name>
    <dbReference type="NCBI Taxonomy" id="9796"/>
    <lineage>
        <taxon>Eukaryota</taxon>
        <taxon>Metazoa</taxon>
        <taxon>Chordata</taxon>
        <taxon>Craniata</taxon>
        <taxon>Vertebrata</taxon>
        <taxon>Euteleostomi</taxon>
        <taxon>Mammalia</taxon>
        <taxon>Eutheria</taxon>
        <taxon>Laurasiatheria</taxon>
        <taxon>Perissodactyla</taxon>
        <taxon>Equidae</taxon>
        <taxon>Equus</taxon>
    </lineage>
</organism>
<protein>
    <recommendedName>
        <fullName evidence="1">Gasdermin-E</fullName>
    </recommendedName>
    <alternativeName>
        <fullName evidence="3">Non-syndromic hearing impairment protein 5 homolog</fullName>
    </alternativeName>
    <component>
        <recommendedName>
            <fullName evidence="1">Gasdermin-E, N-terminal</fullName>
            <shortName evidence="1">GSDME-NT</shortName>
        </recommendedName>
    </component>
    <component>
        <recommendedName>
            <fullName evidence="1">Gasdermin-E, C-terminal</fullName>
            <shortName evidence="1">GSDME-CT</shortName>
        </recommendedName>
    </component>
</protein>
<sequence>MFAKATRSFLREVDAEGDLIAVSNLNDSDKSQLLSLVTKKKRFWCWQRPKYQFLSVTLGDVLTEAQCLSPVVVESDFVKYEGKFENHVSGTIETALGKVKLNFGDKGLRESQSSFGTLRKQEVDLQQLIRDSVERTINLKNPVLQQMLESKNEVLCILTQKIVTTQKCVISEHIQTEEKCGGMVGIKTKTVQVSVTKDENIIKDASVALEIPAPTTIAYSVIELYVKLDGQFEFCLLRGKHGGFEHQRRSDIVFPDAGALQDFPFWDVPDAGQGLPTPDGPLSVLKQGTRLLEKNFFPFVELPEQHRTALNTVLQAVLSDEELLAVLEQVCDDLVHSLSPPLAMLGELKPPHRQDLTAFLRLVGYRVQGGCPCLEDGVGSQKLFSTAYFLVSALAEMPDNAAALLGTCCKLQIIPALCHLLHAMSHDGVCDLEDPALAPLKDTERFGVAQRLFASADINLERVQSSVKAVTPLKDPSVLPLILYISLKGLCALGREH</sequence>
<feature type="chain" id="PRO_0000148177" description="Gasdermin-E">
    <location>
        <begin position="1"/>
        <end position="497"/>
    </location>
</feature>
<feature type="chain" id="PRO_0000442747" description="Gasdermin-E, N-terminal" evidence="1">
    <location>
        <begin position="1"/>
        <end position="270"/>
    </location>
</feature>
<feature type="chain" id="PRO_0000442748" description="Gasdermin-E, C-terminal" evidence="1">
    <location>
        <begin position="271"/>
        <end position="497"/>
    </location>
</feature>
<feature type="region of interest" description="Membrane targeting domain" evidence="1">
    <location>
        <begin position="1"/>
        <end position="56"/>
    </location>
</feature>
<feature type="site" description="Cleavage; by CASP3 or granzyme B" evidence="1">
    <location>
        <begin position="270"/>
        <end position="271"/>
    </location>
</feature>
<feature type="modified residue" description="S-(2-succinyl)cysteine" evidence="1">
    <location>
        <position position="45"/>
    </location>
</feature>
<feature type="modified residue" description="S-(2-succinyl)cysteine" evidence="1">
    <location>
        <position position="156"/>
    </location>
</feature>
<feature type="modified residue" description="S-(2-succinyl)cysteine" evidence="1">
    <location>
        <position position="168"/>
    </location>
</feature>
<feature type="modified residue" description="S-(2-succinyl)cysteine" evidence="1">
    <location>
        <position position="180"/>
    </location>
</feature>
<feature type="modified residue" description="S-(2-succinyl)cysteine" evidence="1">
    <location>
        <position position="235"/>
    </location>
</feature>
<feature type="modified residue" description="S-(2-succinyl)cysteine" evidence="1">
    <location>
        <position position="371"/>
    </location>
</feature>
<feature type="modified residue" description="S-(2-succinyl)cysteine" evidence="1">
    <location>
        <position position="409"/>
    </location>
</feature>
<feature type="modified residue" description="S-(2-succinyl)cysteine" evidence="1">
    <location>
        <position position="418"/>
    </location>
</feature>
<feature type="modified residue" description="S-(2-succinyl)cysteine" evidence="1">
    <location>
        <position position="491"/>
    </location>
</feature>
<feature type="cross-link" description="Glycyl lysine isopeptide (Lys-Gly) (interchain with G-Cter in ubiquitin)" evidence="1">
    <location>
        <position position="120"/>
    </location>
</feature>
<feature type="cross-link" description="Glycyl lysine isopeptide (Lys-Gly) (interchain with G-Cter in ubiquitin)" evidence="1">
    <location>
        <position position="189"/>
    </location>
</feature>
<name>GSDME_HORSE</name>
<accession>Q7YS54</accession>
<reference key="1">
    <citation type="journal article" date="2003" name="Biochim. Biophys. Acta">
        <title>A yeast model for the study of human DFNA5, a gene mutated in nonsyndromic hearing impairment.</title>
        <authorList>
            <person name="Gregan J."/>
            <person name="Van Laer L."/>
            <person name="Lieto L.D."/>
            <person name="Van Camp G."/>
            <person name="Kearsey S.E."/>
        </authorList>
    </citation>
    <scope>NUCLEOTIDE SEQUENCE [MRNA]</scope>
</reference>
<evidence type="ECO:0000250" key="1">
    <source>
        <dbReference type="UniProtKB" id="O60443"/>
    </source>
</evidence>
<evidence type="ECO:0000250" key="2">
    <source>
        <dbReference type="UniProtKB" id="Q5Y4Y6"/>
    </source>
</evidence>
<evidence type="ECO:0000305" key="3"/>
<keyword id="KW-1003">Cell membrane</keyword>
<keyword id="KW-0963">Cytoplasm</keyword>
<keyword id="KW-1017">Isopeptide bond</keyword>
<keyword id="KW-0449">Lipoprotein</keyword>
<keyword id="KW-0472">Membrane</keyword>
<keyword id="KW-1210">Necrosis</keyword>
<keyword id="KW-0564">Palmitate</keyword>
<keyword id="KW-1185">Reference proteome</keyword>
<keyword id="KW-0812">Transmembrane</keyword>
<keyword id="KW-1134">Transmembrane beta strand</keyword>
<keyword id="KW-0832">Ubl conjugation</keyword>
<comment type="function">
    <molecule>Gasdermin-E</molecule>
    <text evidence="1">Precursor of a pore-forming protein that converts non-inflammatory apoptosis to pyroptosis. This form constitutes the precursor of the pore-forming protein: upon cleavage, the released N-terminal moiety (Gasdermin-E, N-terminal) binds to membranes and forms pores, triggering pyroptosis.</text>
</comment>
<comment type="function">
    <molecule>Gasdermin-E, N-terminal</molecule>
    <text evidence="1">Pore-forming protein produced by cleavage by CASP3 or granzyme B (GZMB), which converts non-inflammatory apoptosis to pyroptosis or promotes granzyme-mediated pyroptosis, respectively. After cleavage, moves to the plasma membrane, homooligomerizes within the membrane and forms pores of 10-15 nanometers (nm) of inner diameter, allowing the release of mature interleukins (IL1B and IL16) and triggering pyroptosis. Binds to inner leaflet lipids, bisphosphorylated phosphatidylinositols, such as phosphatidylinositol (4,5)-bisphosphate. Cleavage by CASP3 switches CASP3-mediated apoptosis induced by TNF or danger signals, such as chemotherapy drugs, to pyroptosis. Mediates secondary necrosis downstream of the mitochondrial apoptotic pathway and CASP3 activation as well as in response to viral agents. Exhibits bactericidal activity. Cleavage by GZMB promotes tumor suppressor activity by triggering robust anti-tumor immunity. Suppresses tumors by mediating granzyme-mediated pyroptosis in target cells of natural killer (NK) cells: cleavage by granzyme B (GZMB), delivered to target cells from NK-cells, triggers pyroptosis of tumor cells and tumor suppression. May play a role in the p53/TP53-regulated cellular response to DNA damage.</text>
</comment>
<comment type="activity regulation">
    <molecule>Gasdermin-E</molecule>
    <text evidence="1">The full-length protein before cleavage is inactive: intramolecular interactions between N- and C-terminal domains mediate autoinhibition in the absence of activation signal. The intrinsic pyroptosis-inducing activity is carried by the released N-terminal moiety (Gasdermin-E, N-terminal) following cleavage by CASP3 or granzyme B (GZMB). Activated by NLRP1 in the absence of GSDMD expression: NLRP1 cleaves and activates CASP8, promoting downstream activation of CASP3 and subsequent activation of GSDME.</text>
</comment>
<comment type="subunit">
    <molecule>Gasdermin-E, N-terminal</molecule>
    <text evidence="2">Homooligomer; homooligomeric ring-shaped pore complex containing 27-28 subunits when inserted in the membrane.</text>
</comment>
<comment type="subcellular location">
    <molecule>Gasdermin-E, N-terminal</molecule>
    <subcellularLocation>
        <location evidence="1">Cell membrane</location>
        <topology evidence="2">Multi-pass membrane protein</topology>
    </subcellularLocation>
</comment>
<comment type="subcellular location">
    <molecule>Gasdermin-E</molecule>
    <subcellularLocation>
        <location evidence="1">Cytoplasm</location>
        <location evidence="1">Cytosol</location>
    </subcellularLocation>
</comment>
<comment type="domain">
    <text evidence="1">Intramolecular interactions between N- and C-terminal domains may be important for autoinhibition in the absence of activation signal. The intrinsic pyroptosis-inducing activity is carried by the N-terminal domain, that is released upon cleavage by CASP3 or granzyme B (GZMB).</text>
</comment>
<comment type="PTM">
    <text evidence="1">Cleavage at Asp-270 by CASP3 (mature and uncleaved precursor forms) or granzyme B (GZMB) relieves autoinhibition and is sufficient to initiate pyroptosis.</text>
</comment>
<comment type="PTM">
    <molecule>Gasdermin-E</molecule>
    <text evidence="1">Succination by the Krebs cycle intermediate fumarate, which leads to S-(2-succinyl)cysteine residues, inhibits processing by caspases, and ability to initiate pyroptosis. Succination modification is catalyzed by a non-enzymatic reaction caused by an accumulation of fumarate.</text>
</comment>
<comment type="PTM">
    <molecule>Gasdermin-E</molecule>
    <text evidence="1">Ubiquitinated on Lys-120 and Lys-189 via 'Lys-48'-linked polyubiquitin chains, leading to proteasomal degradation. Deubiquitinated by USP48, leading to increased stability.</text>
</comment>
<comment type="PTM">
    <text evidence="1">Palmitoylated.</text>
</comment>
<comment type="similarity">
    <text evidence="3">Belongs to the gasdermin family.</text>
</comment>